<accession>Q0SFB3</accession>
<proteinExistence type="inferred from homology"/>
<comment type="function">
    <text evidence="1">DNA-dependent RNA polymerase catalyzes the transcription of DNA into RNA using the four ribonucleoside triphosphates as substrates.</text>
</comment>
<comment type="catalytic activity">
    <reaction evidence="1">
        <text>RNA(n) + a ribonucleoside 5'-triphosphate = RNA(n+1) + diphosphate</text>
        <dbReference type="Rhea" id="RHEA:21248"/>
        <dbReference type="Rhea" id="RHEA-COMP:14527"/>
        <dbReference type="Rhea" id="RHEA-COMP:17342"/>
        <dbReference type="ChEBI" id="CHEBI:33019"/>
        <dbReference type="ChEBI" id="CHEBI:61557"/>
        <dbReference type="ChEBI" id="CHEBI:140395"/>
        <dbReference type="EC" id="2.7.7.6"/>
    </reaction>
</comment>
<comment type="subunit">
    <text evidence="1">The RNAP catalytic core consists of 2 alpha, 1 beta, 1 beta' and 1 omega subunit. When a sigma factor is associated with the core the holoenzyme is formed, which can initiate transcription.</text>
</comment>
<comment type="similarity">
    <text evidence="1">Belongs to the RNA polymerase beta chain family.</text>
</comment>
<organism>
    <name type="scientific">Rhodococcus jostii (strain RHA1)</name>
    <dbReference type="NCBI Taxonomy" id="101510"/>
    <lineage>
        <taxon>Bacteria</taxon>
        <taxon>Bacillati</taxon>
        <taxon>Actinomycetota</taxon>
        <taxon>Actinomycetes</taxon>
        <taxon>Mycobacteriales</taxon>
        <taxon>Nocardiaceae</taxon>
        <taxon>Rhodococcus</taxon>
    </lineage>
</organism>
<name>RPOB_RHOJR</name>
<feature type="chain" id="PRO_0000300385" description="DNA-directed RNA polymerase subunit beta">
    <location>
        <begin position="1"/>
        <end position="1168"/>
    </location>
</feature>
<dbReference type="EC" id="2.7.7.6" evidence="1"/>
<dbReference type="EMBL" id="CP000431">
    <property type="protein sequence ID" value="ABG93773.1"/>
    <property type="molecule type" value="Genomic_DNA"/>
</dbReference>
<dbReference type="RefSeq" id="WP_011594854.1">
    <property type="nucleotide sequence ID" value="NC_008268.1"/>
</dbReference>
<dbReference type="SMR" id="Q0SFB3"/>
<dbReference type="GeneID" id="69893655"/>
<dbReference type="KEGG" id="rha:RHA1_ro01962"/>
<dbReference type="eggNOG" id="COG0085">
    <property type="taxonomic scope" value="Bacteria"/>
</dbReference>
<dbReference type="HOGENOM" id="CLU_000524_4_1_11"/>
<dbReference type="OrthoDB" id="9803954at2"/>
<dbReference type="Proteomes" id="UP000008710">
    <property type="component" value="Chromosome"/>
</dbReference>
<dbReference type="GO" id="GO:0000428">
    <property type="term" value="C:DNA-directed RNA polymerase complex"/>
    <property type="evidence" value="ECO:0007669"/>
    <property type="project" value="UniProtKB-KW"/>
</dbReference>
<dbReference type="GO" id="GO:0003677">
    <property type="term" value="F:DNA binding"/>
    <property type="evidence" value="ECO:0007669"/>
    <property type="project" value="UniProtKB-UniRule"/>
</dbReference>
<dbReference type="GO" id="GO:0003899">
    <property type="term" value="F:DNA-directed RNA polymerase activity"/>
    <property type="evidence" value="ECO:0007669"/>
    <property type="project" value="UniProtKB-UniRule"/>
</dbReference>
<dbReference type="GO" id="GO:0032549">
    <property type="term" value="F:ribonucleoside binding"/>
    <property type="evidence" value="ECO:0007669"/>
    <property type="project" value="InterPro"/>
</dbReference>
<dbReference type="GO" id="GO:0006351">
    <property type="term" value="P:DNA-templated transcription"/>
    <property type="evidence" value="ECO:0007669"/>
    <property type="project" value="UniProtKB-UniRule"/>
</dbReference>
<dbReference type="CDD" id="cd00653">
    <property type="entry name" value="RNA_pol_B_RPB2"/>
    <property type="match status" value="1"/>
</dbReference>
<dbReference type="FunFam" id="3.90.1800.10:FF:000005">
    <property type="entry name" value="DNA-directed RNA polymerase subunit beta"/>
    <property type="match status" value="1"/>
</dbReference>
<dbReference type="Gene3D" id="2.40.50.100">
    <property type="match status" value="1"/>
</dbReference>
<dbReference type="Gene3D" id="2.40.50.150">
    <property type="match status" value="1"/>
</dbReference>
<dbReference type="Gene3D" id="3.90.1100.10">
    <property type="match status" value="1"/>
</dbReference>
<dbReference type="Gene3D" id="2.30.150.10">
    <property type="entry name" value="DNA-directed RNA polymerase, beta subunit, external 1 domain"/>
    <property type="match status" value="1"/>
</dbReference>
<dbReference type="Gene3D" id="2.40.270.10">
    <property type="entry name" value="DNA-directed RNA polymerase, subunit 2, domain 6"/>
    <property type="match status" value="1"/>
</dbReference>
<dbReference type="Gene3D" id="3.90.1800.10">
    <property type="entry name" value="RNA polymerase alpha subunit dimerisation domain"/>
    <property type="match status" value="1"/>
</dbReference>
<dbReference type="Gene3D" id="3.90.1110.10">
    <property type="entry name" value="RNA polymerase Rpb2, domain 2"/>
    <property type="match status" value="1"/>
</dbReference>
<dbReference type="HAMAP" id="MF_01321">
    <property type="entry name" value="RNApol_bact_RpoB"/>
    <property type="match status" value="1"/>
</dbReference>
<dbReference type="InterPro" id="IPR042107">
    <property type="entry name" value="DNA-dir_RNA_pol_bsu_ext_1_sf"/>
</dbReference>
<dbReference type="InterPro" id="IPR019462">
    <property type="entry name" value="DNA-dir_RNA_pol_bsu_external_1"/>
</dbReference>
<dbReference type="InterPro" id="IPR015712">
    <property type="entry name" value="DNA-dir_RNA_pol_su2"/>
</dbReference>
<dbReference type="InterPro" id="IPR007120">
    <property type="entry name" value="DNA-dir_RNAP_su2_dom"/>
</dbReference>
<dbReference type="InterPro" id="IPR037033">
    <property type="entry name" value="DNA-dir_RNAP_su2_hyb_sf"/>
</dbReference>
<dbReference type="InterPro" id="IPR010243">
    <property type="entry name" value="RNA_pol_bsu_bac"/>
</dbReference>
<dbReference type="InterPro" id="IPR007121">
    <property type="entry name" value="RNA_pol_bsu_CS"/>
</dbReference>
<dbReference type="InterPro" id="IPR007644">
    <property type="entry name" value="RNA_pol_bsu_protrusion"/>
</dbReference>
<dbReference type="InterPro" id="IPR007642">
    <property type="entry name" value="RNA_pol_Rpb2_2"/>
</dbReference>
<dbReference type="InterPro" id="IPR037034">
    <property type="entry name" value="RNA_pol_Rpb2_2_sf"/>
</dbReference>
<dbReference type="InterPro" id="IPR007645">
    <property type="entry name" value="RNA_pol_Rpb2_3"/>
</dbReference>
<dbReference type="InterPro" id="IPR007641">
    <property type="entry name" value="RNA_pol_Rpb2_7"/>
</dbReference>
<dbReference type="InterPro" id="IPR014724">
    <property type="entry name" value="RNA_pol_RPB2_OB-fold"/>
</dbReference>
<dbReference type="NCBIfam" id="NF001616">
    <property type="entry name" value="PRK00405.1"/>
    <property type="match status" value="1"/>
</dbReference>
<dbReference type="NCBIfam" id="TIGR02013">
    <property type="entry name" value="rpoB"/>
    <property type="match status" value="1"/>
</dbReference>
<dbReference type="PANTHER" id="PTHR20856">
    <property type="entry name" value="DNA-DIRECTED RNA POLYMERASE I SUBUNIT 2"/>
    <property type="match status" value="1"/>
</dbReference>
<dbReference type="Pfam" id="PF04563">
    <property type="entry name" value="RNA_pol_Rpb2_1"/>
    <property type="match status" value="1"/>
</dbReference>
<dbReference type="Pfam" id="PF04561">
    <property type="entry name" value="RNA_pol_Rpb2_2"/>
    <property type="match status" value="1"/>
</dbReference>
<dbReference type="Pfam" id="PF04565">
    <property type="entry name" value="RNA_pol_Rpb2_3"/>
    <property type="match status" value="1"/>
</dbReference>
<dbReference type="Pfam" id="PF10385">
    <property type="entry name" value="RNA_pol_Rpb2_45"/>
    <property type="match status" value="1"/>
</dbReference>
<dbReference type="Pfam" id="PF00562">
    <property type="entry name" value="RNA_pol_Rpb2_6"/>
    <property type="match status" value="1"/>
</dbReference>
<dbReference type="Pfam" id="PF04560">
    <property type="entry name" value="RNA_pol_Rpb2_7"/>
    <property type="match status" value="1"/>
</dbReference>
<dbReference type="SUPFAM" id="SSF64484">
    <property type="entry name" value="beta and beta-prime subunits of DNA dependent RNA-polymerase"/>
    <property type="match status" value="1"/>
</dbReference>
<dbReference type="PROSITE" id="PS01166">
    <property type="entry name" value="RNA_POL_BETA"/>
    <property type="match status" value="1"/>
</dbReference>
<reference key="1">
    <citation type="journal article" date="2006" name="Proc. Natl. Acad. Sci. U.S.A.">
        <title>The complete genome of Rhodococcus sp. RHA1 provides insights into a catabolic powerhouse.</title>
        <authorList>
            <person name="McLeod M.P."/>
            <person name="Warren R.L."/>
            <person name="Hsiao W.W.L."/>
            <person name="Araki N."/>
            <person name="Myhre M."/>
            <person name="Fernandes C."/>
            <person name="Miyazawa D."/>
            <person name="Wong W."/>
            <person name="Lillquist A.L."/>
            <person name="Wang D."/>
            <person name="Dosanjh M."/>
            <person name="Hara H."/>
            <person name="Petrescu A."/>
            <person name="Morin R.D."/>
            <person name="Yang G."/>
            <person name="Stott J.M."/>
            <person name="Schein J.E."/>
            <person name="Shin H."/>
            <person name="Smailus D."/>
            <person name="Siddiqui A.S."/>
            <person name="Marra M.A."/>
            <person name="Jones S.J.M."/>
            <person name="Holt R."/>
            <person name="Brinkman F.S.L."/>
            <person name="Miyauchi K."/>
            <person name="Fukuda M."/>
            <person name="Davies J.E."/>
            <person name="Mohn W.W."/>
            <person name="Eltis L.D."/>
        </authorList>
    </citation>
    <scope>NUCLEOTIDE SEQUENCE [LARGE SCALE GENOMIC DNA]</scope>
    <source>
        <strain>RHA1</strain>
    </source>
</reference>
<evidence type="ECO:0000255" key="1">
    <source>
        <dbReference type="HAMAP-Rule" id="MF_01321"/>
    </source>
</evidence>
<gene>
    <name evidence="1" type="primary">rpoB</name>
    <name type="ordered locus">RHA1_ro01962</name>
</gene>
<sequence>MLEGRILAVSSQTKAVSGIPGAPKRVSFAKIREPLEVPGLLDVQTDSFEWLIGAQSWRERAAARGDSAISGGLEDILAELSPIEDFSGSMSLSFSDPRFDEVKASTDECKDKDMTYAAPLFVTAEFINNNTGEIKSQTVFMGDFPMMTDKGTFIINGTERVVVSQLVRSPGVYFDHSVDKGTEKDLHSVKVIPGRGAWLEFDVDKRDTVGVRIDRKRRQPVTVLLKALGWTTEQITERFGFSEILMATLEKDNTAGTDEALLDIYRKLRPGEPPTKESAQTLLENLFFKDKRYDLARVGRYKINKKLGLNLGQPIVASTLTEEDIVATIEYLVRLHAGDTEMTAPGGSAVPVEVDDIDHFGNRRLRTVGELIQNQIRVGLSRMERVVRERMTTQDVEAITPQTLINIRPVVAAIKEFFGTSQLSQFMDQNNPLSGLTHKRRLSALGPGGLSRERAGLEVRDVHPSHYGRMCPIETPEGPNIGLIGSLSVYARVNPFGFIETPYRKVENGQVTDQVDYLTADEEDRHVVAQANSALDANGHFTDDRILVRRKGGEVEFVSSAEIDYMDVSPRQMVSVATAMIPFLEHDDANRALMGANMQRQAVPLVRSEAPLVGTGMELRAAVDAGDVIVTEKTGVVEEVSADYVTVMADDGSRKTYRMRKFARSNQGTCANQRPIVDEGQRVEFGQVLADGPCTENGEMALGKNLLVAIMPWEGHNYEDAIILSQRLVEEDVLTSIHIEEHEIDARDTKLGAEEITRDIPNVSDEVLADLDERGIIRIGAEVRDGDVLVGKVTPKGETELTPEERLLRAIFGEKAREVRDTSLKVPHGETGKVIGIRVFSRDDDDDLPPGVNELVRVYVAQKRKIQDGDKLAGRHGNKGVIGKILPQEDMPFLPDGTPVDIILNTHGVPRRMNIGQILETHLGWIGKTGWNVQIAGDGSRPDWAEQLPEEMLSAPADSNIATPVFDGAKEDELTGLLGSTLPNRDGEVMVASDGKATLFDGRSGEPFPYPVSVGYMYIIKLHHLVDDKIHARSTGPYSMITQQPLGGKAQFGGQRFGEMECWAMQAYGAAYTLQELLTIKSDDVVGRVKVYEAIVKGENIPEPGIPESFKVLLKELQSLCLNVEVLSSDGAAIAMADGDDEDLERAAANLGINLSRNEAATVDDLAN</sequence>
<keyword id="KW-0240">DNA-directed RNA polymerase</keyword>
<keyword id="KW-0548">Nucleotidyltransferase</keyword>
<keyword id="KW-0804">Transcription</keyword>
<keyword id="KW-0808">Transferase</keyword>
<protein>
    <recommendedName>
        <fullName evidence="1">DNA-directed RNA polymerase subunit beta</fullName>
        <shortName evidence="1">RNAP subunit beta</shortName>
        <ecNumber evidence="1">2.7.7.6</ecNumber>
    </recommendedName>
    <alternativeName>
        <fullName evidence="1">RNA polymerase subunit beta</fullName>
    </alternativeName>
    <alternativeName>
        <fullName evidence="1">Transcriptase subunit beta</fullName>
    </alternativeName>
</protein>